<proteinExistence type="inferred from homology"/>
<organism>
    <name type="scientific">Acanthamoeba polyphaga mimivirus</name>
    <name type="common">APMV</name>
    <dbReference type="NCBI Taxonomy" id="212035"/>
    <lineage>
        <taxon>Viruses</taxon>
        <taxon>Varidnaviria</taxon>
        <taxon>Bamfordvirae</taxon>
        <taxon>Nucleocytoviricota</taxon>
        <taxon>Megaviricetes</taxon>
        <taxon>Imitervirales</taxon>
        <taxon>Mimiviridae</taxon>
        <taxon>Megamimivirinae</taxon>
        <taxon>Mimivirus</taxon>
        <taxon>Mimivirus bradfordmassiliense</taxon>
    </lineage>
</organism>
<accession>Q5UP37</accession>
<reference key="1">
    <citation type="journal article" date="2004" name="Science">
        <title>The 1.2-megabase genome sequence of Mimivirus.</title>
        <authorList>
            <person name="Raoult D."/>
            <person name="Audic S."/>
            <person name="Robert C."/>
            <person name="Abergel C."/>
            <person name="Renesto P."/>
            <person name="Ogata H."/>
            <person name="La Scola B."/>
            <person name="Susan M."/>
            <person name="Claverie J.-M."/>
        </authorList>
    </citation>
    <scope>NUCLEOTIDE SEQUENCE [LARGE SCALE GENOMIC DNA]</scope>
    <source>
        <strain>Rowbotham-Bradford</strain>
    </source>
</reference>
<gene>
    <name type="ordered locus">MIMI_L163</name>
</gene>
<keyword id="KW-1185">Reference proteome</keyword>
<name>YL163_MIMIV</name>
<sequence length="136" mass="16472">MSRILKMNGRRQMWSQLQNEIILNDTVHINGFEGIGGMNRPVFMCRKLFVDNCDKNFIFYRLNKYSFPNVRELWLASHPTDPEVIHRPFDKIYLLDQYKYLQRYWAPRNTDIESVSYGRYLVELFAYYPENIKLHP</sequence>
<dbReference type="EMBL" id="AY653733">
    <property type="protein sequence ID" value="AAV50437.1"/>
    <property type="molecule type" value="Genomic_DNA"/>
</dbReference>
<dbReference type="KEGG" id="vg:9924763"/>
<dbReference type="OrthoDB" id="38387at10239"/>
<dbReference type="Proteomes" id="UP000001134">
    <property type="component" value="Genome"/>
</dbReference>
<dbReference type="InterPro" id="IPR043887">
    <property type="entry name" value="DUF5845"/>
</dbReference>
<dbReference type="Pfam" id="PF19163">
    <property type="entry name" value="DUF5845"/>
    <property type="match status" value="1"/>
</dbReference>
<organismHost>
    <name type="scientific">Acanthamoeba polyphaga</name>
    <name type="common">Amoeba</name>
    <dbReference type="NCBI Taxonomy" id="5757"/>
</organismHost>
<protein>
    <recommendedName>
        <fullName>Uncharacterized protein L163</fullName>
    </recommendedName>
</protein>
<evidence type="ECO:0000305" key="1"/>
<feature type="chain" id="PRO_0000071226" description="Uncharacterized protein L163">
    <location>
        <begin position="1"/>
        <end position="136"/>
    </location>
</feature>
<comment type="similarity">
    <text evidence="1">Belongs to the mimivirus L163/R849 family.</text>
</comment>